<protein>
    <recommendedName>
        <fullName evidence="1">ATP-dependent Clp protease ATP-binding subunit ClpX</fullName>
    </recommendedName>
</protein>
<evidence type="ECO:0000255" key="1">
    <source>
        <dbReference type="HAMAP-Rule" id="MF_00175"/>
    </source>
</evidence>
<evidence type="ECO:0000255" key="2">
    <source>
        <dbReference type="PROSITE-ProRule" id="PRU01250"/>
    </source>
</evidence>
<comment type="function">
    <text evidence="1">ATP-dependent specificity component of the Clp protease. It directs the protease to specific substrates. Can perform chaperone functions in the absence of ClpP.</text>
</comment>
<comment type="subunit">
    <text evidence="1">Component of the ClpX-ClpP complex. Forms a hexameric ring that, in the presence of ATP, binds to fourteen ClpP subunits assembled into a disk-like structure with a central cavity, resembling the structure of eukaryotic proteasomes.</text>
</comment>
<comment type="similarity">
    <text evidence="1">Belongs to the ClpX chaperone family.</text>
</comment>
<organism>
    <name type="scientific">Xanthomonas oryzae pv. oryzae (strain PXO99A)</name>
    <dbReference type="NCBI Taxonomy" id="360094"/>
    <lineage>
        <taxon>Bacteria</taxon>
        <taxon>Pseudomonadati</taxon>
        <taxon>Pseudomonadota</taxon>
        <taxon>Gammaproteobacteria</taxon>
        <taxon>Lysobacterales</taxon>
        <taxon>Lysobacteraceae</taxon>
        <taxon>Xanthomonas</taxon>
    </lineage>
</organism>
<accession>B2SMI2</accession>
<feature type="chain" id="PRO_1000098017" description="ATP-dependent Clp protease ATP-binding subunit ClpX">
    <location>
        <begin position="1"/>
        <end position="428"/>
    </location>
</feature>
<feature type="domain" description="ClpX-type ZB" evidence="2">
    <location>
        <begin position="6"/>
        <end position="59"/>
    </location>
</feature>
<feature type="binding site" evidence="2">
    <location>
        <position position="18"/>
    </location>
    <ligand>
        <name>Zn(2+)</name>
        <dbReference type="ChEBI" id="CHEBI:29105"/>
    </ligand>
</feature>
<feature type="binding site" evidence="2">
    <location>
        <position position="21"/>
    </location>
    <ligand>
        <name>Zn(2+)</name>
        <dbReference type="ChEBI" id="CHEBI:29105"/>
    </ligand>
</feature>
<feature type="binding site" evidence="2">
    <location>
        <position position="40"/>
    </location>
    <ligand>
        <name>Zn(2+)</name>
        <dbReference type="ChEBI" id="CHEBI:29105"/>
    </ligand>
</feature>
<feature type="binding site" evidence="2">
    <location>
        <position position="43"/>
    </location>
    <ligand>
        <name>Zn(2+)</name>
        <dbReference type="ChEBI" id="CHEBI:29105"/>
    </ligand>
</feature>
<feature type="binding site" evidence="1">
    <location>
        <begin position="122"/>
        <end position="129"/>
    </location>
    <ligand>
        <name>ATP</name>
        <dbReference type="ChEBI" id="CHEBI:30616"/>
    </ligand>
</feature>
<proteinExistence type="inferred from homology"/>
<reference key="1">
    <citation type="journal article" date="2008" name="BMC Genomics">
        <title>Genome sequence and rapid evolution of the rice pathogen Xanthomonas oryzae pv. oryzae PXO99A.</title>
        <authorList>
            <person name="Salzberg S.L."/>
            <person name="Sommer D.D."/>
            <person name="Schatz M.C."/>
            <person name="Phillippy A.M."/>
            <person name="Rabinowicz P.D."/>
            <person name="Tsuge S."/>
            <person name="Furutani A."/>
            <person name="Ochiai H."/>
            <person name="Delcher A.L."/>
            <person name="Kelley D."/>
            <person name="Madupu R."/>
            <person name="Puiu D."/>
            <person name="Radune D."/>
            <person name="Shumway M."/>
            <person name="Trapnell C."/>
            <person name="Aparna G."/>
            <person name="Jha G."/>
            <person name="Pandey A."/>
            <person name="Patil P.B."/>
            <person name="Ishihara H."/>
            <person name="Meyer D.F."/>
            <person name="Szurek B."/>
            <person name="Verdier V."/>
            <person name="Koebnik R."/>
            <person name="Dow J.M."/>
            <person name="Ryan R.P."/>
            <person name="Hirata H."/>
            <person name="Tsuyumu S."/>
            <person name="Won Lee S."/>
            <person name="Seo Y.-S."/>
            <person name="Sriariyanum M."/>
            <person name="Ronald P.C."/>
            <person name="Sonti R.V."/>
            <person name="Van Sluys M.-A."/>
            <person name="Leach J.E."/>
            <person name="White F.F."/>
            <person name="Bogdanove A.J."/>
        </authorList>
    </citation>
    <scope>NUCLEOTIDE SEQUENCE [LARGE SCALE GENOMIC DNA]</scope>
    <source>
        <strain>PXO99A</strain>
    </source>
</reference>
<sequence>MSEDRQGRSGDSNKILYCSFCGKSQHEVRKLIAGPSVFICDECVELCNDIIREELEEKAQSARSSLPKPREILEVLDQYVIGQLRAKRTLAVAVYNHYKRIESRSKNDDVELAKSNILLVGPTGSGKTLLAETLARLLNVPFTIADATTLTEAGYVGEDVENIIQKLLQKCDYDVEKAQQGIVYIDEIDKISRKSENPSITRDVSGEGVQQALLKLIEGTVASVPPQGGRKHPQQEFLQVDTKNILFICGGAFAGLDKVIQQRSNDAGGIGFGVKVKSSERKQEVGKILAEVEPEDLIKFGLIPEFVGRLPVVATLEELDEPALIKILTEPKNAITKQFKKLFDMEGVELEFRADALSAIAKKALKRKTGARGLRTIVESVLLDTMYELPSQENVSKVVVDESVIEHKSEPYLIYQAQPAPAKAASGD</sequence>
<dbReference type="EMBL" id="CP000967">
    <property type="protein sequence ID" value="ACD60767.1"/>
    <property type="molecule type" value="Genomic_DNA"/>
</dbReference>
<dbReference type="RefSeq" id="WP_012445938.1">
    <property type="nucleotide sequence ID" value="NC_010717.2"/>
</dbReference>
<dbReference type="SMR" id="B2SMI2"/>
<dbReference type="KEGG" id="xop:PXO_02476"/>
<dbReference type="eggNOG" id="COG1219">
    <property type="taxonomic scope" value="Bacteria"/>
</dbReference>
<dbReference type="HOGENOM" id="CLU_014218_8_2_6"/>
<dbReference type="Proteomes" id="UP000001740">
    <property type="component" value="Chromosome"/>
</dbReference>
<dbReference type="GO" id="GO:0009376">
    <property type="term" value="C:HslUV protease complex"/>
    <property type="evidence" value="ECO:0007669"/>
    <property type="project" value="TreeGrafter"/>
</dbReference>
<dbReference type="GO" id="GO:0005524">
    <property type="term" value="F:ATP binding"/>
    <property type="evidence" value="ECO:0007669"/>
    <property type="project" value="UniProtKB-UniRule"/>
</dbReference>
<dbReference type="GO" id="GO:0016887">
    <property type="term" value="F:ATP hydrolysis activity"/>
    <property type="evidence" value="ECO:0007669"/>
    <property type="project" value="InterPro"/>
</dbReference>
<dbReference type="GO" id="GO:0140662">
    <property type="term" value="F:ATP-dependent protein folding chaperone"/>
    <property type="evidence" value="ECO:0007669"/>
    <property type="project" value="InterPro"/>
</dbReference>
<dbReference type="GO" id="GO:0046983">
    <property type="term" value="F:protein dimerization activity"/>
    <property type="evidence" value="ECO:0007669"/>
    <property type="project" value="InterPro"/>
</dbReference>
<dbReference type="GO" id="GO:0051082">
    <property type="term" value="F:unfolded protein binding"/>
    <property type="evidence" value="ECO:0007669"/>
    <property type="project" value="UniProtKB-UniRule"/>
</dbReference>
<dbReference type="GO" id="GO:0008270">
    <property type="term" value="F:zinc ion binding"/>
    <property type="evidence" value="ECO:0007669"/>
    <property type="project" value="InterPro"/>
</dbReference>
<dbReference type="GO" id="GO:0051301">
    <property type="term" value="P:cell division"/>
    <property type="evidence" value="ECO:0007669"/>
    <property type="project" value="TreeGrafter"/>
</dbReference>
<dbReference type="GO" id="GO:0051603">
    <property type="term" value="P:proteolysis involved in protein catabolic process"/>
    <property type="evidence" value="ECO:0007669"/>
    <property type="project" value="TreeGrafter"/>
</dbReference>
<dbReference type="CDD" id="cd19497">
    <property type="entry name" value="RecA-like_ClpX"/>
    <property type="match status" value="1"/>
</dbReference>
<dbReference type="FunFam" id="1.10.8.60:FF:000002">
    <property type="entry name" value="ATP-dependent Clp protease ATP-binding subunit ClpX"/>
    <property type="match status" value="1"/>
</dbReference>
<dbReference type="FunFam" id="3.40.50.300:FF:000005">
    <property type="entry name" value="ATP-dependent Clp protease ATP-binding subunit ClpX"/>
    <property type="match status" value="1"/>
</dbReference>
<dbReference type="Gene3D" id="1.10.8.60">
    <property type="match status" value="1"/>
</dbReference>
<dbReference type="Gene3D" id="6.20.220.10">
    <property type="entry name" value="ClpX chaperone, C4-type zinc finger domain"/>
    <property type="match status" value="1"/>
</dbReference>
<dbReference type="Gene3D" id="3.40.50.300">
    <property type="entry name" value="P-loop containing nucleotide triphosphate hydrolases"/>
    <property type="match status" value="1"/>
</dbReference>
<dbReference type="HAMAP" id="MF_00175">
    <property type="entry name" value="ClpX"/>
    <property type="match status" value="1"/>
</dbReference>
<dbReference type="InterPro" id="IPR003593">
    <property type="entry name" value="AAA+_ATPase"/>
</dbReference>
<dbReference type="InterPro" id="IPR050052">
    <property type="entry name" value="ATP-dep_Clp_protease_ClpX"/>
</dbReference>
<dbReference type="InterPro" id="IPR003959">
    <property type="entry name" value="ATPase_AAA_core"/>
</dbReference>
<dbReference type="InterPro" id="IPR019489">
    <property type="entry name" value="Clp_ATPase_C"/>
</dbReference>
<dbReference type="InterPro" id="IPR004487">
    <property type="entry name" value="Clp_protease_ATP-bd_su_ClpX"/>
</dbReference>
<dbReference type="InterPro" id="IPR046425">
    <property type="entry name" value="ClpX_bact"/>
</dbReference>
<dbReference type="InterPro" id="IPR027417">
    <property type="entry name" value="P-loop_NTPase"/>
</dbReference>
<dbReference type="InterPro" id="IPR010603">
    <property type="entry name" value="Znf_CppX_C4"/>
</dbReference>
<dbReference type="InterPro" id="IPR038366">
    <property type="entry name" value="Znf_CppX_C4_sf"/>
</dbReference>
<dbReference type="NCBIfam" id="TIGR00382">
    <property type="entry name" value="clpX"/>
    <property type="match status" value="1"/>
</dbReference>
<dbReference type="NCBIfam" id="NF003745">
    <property type="entry name" value="PRK05342.1"/>
    <property type="match status" value="1"/>
</dbReference>
<dbReference type="PANTHER" id="PTHR48102:SF7">
    <property type="entry name" value="ATP-DEPENDENT CLP PROTEASE ATP-BINDING SUBUNIT CLPX-LIKE, MITOCHONDRIAL"/>
    <property type="match status" value="1"/>
</dbReference>
<dbReference type="PANTHER" id="PTHR48102">
    <property type="entry name" value="ATP-DEPENDENT CLP PROTEASE ATP-BINDING SUBUNIT CLPX-LIKE, MITOCHONDRIAL-RELATED"/>
    <property type="match status" value="1"/>
</dbReference>
<dbReference type="Pfam" id="PF07724">
    <property type="entry name" value="AAA_2"/>
    <property type="match status" value="1"/>
</dbReference>
<dbReference type="Pfam" id="PF10431">
    <property type="entry name" value="ClpB_D2-small"/>
    <property type="match status" value="1"/>
</dbReference>
<dbReference type="Pfam" id="PF06689">
    <property type="entry name" value="zf-C4_ClpX"/>
    <property type="match status" value="1"/>
</dbReference>
<dbReference type="SMART" id="SM00382">
    <property type="entry name" value="AAA"/>
    <property type="match status" value="1"/>
</dbReference>
<dbReference type="SMART" id="SM01086">
    <property type="entry name" value="ClpB_D2-small"/>
    <property type="match status" value="1"/>
</dbReference>
<dbReference type="SMART" id="SM00994">
    <property type="entry name" value="zf-C4_ClpX"/>
    <property type="match status" value="1"/>
</dbReference>
<dbReference type="SUPFAM" id="SSF57716">
    <property type="entry name" value="Glucocorticoid receptor-like (DNA-binding domain)"/>
    <property type="match status" value="1"/>
</dbReference>
<dbReference type="SUPFAM" id="SSF52540">
    <property type="entry name" value="P-loop containing nucleoside triphosphate hydrolases"/>
    <property type="match status" value="1"/>
</dbReference>
<dbReference type="PROSITE" id="PS51902">
    <property type="entry name" value="CLPX_ZB"/>
    <property type="match status" value="1"/>
</dbReference>
<name>CLPX_XANOP</name>
<keyword id="KW-0067">ATP-binding</keyword>
<keyword id="KW-0143">Chaperone</keyword>
<keyword id="KW-0479">Metal-binding</keyword>
<keyword id="KW-0547">Nucleotide-binding</keyword>
<keyword id="KW-0862">Zinc</keyword>
<gene>
    <name evidence="1" type="primary">clpX</name>
    <name type="ordered locus">PXO_02476</name>
</gene>